<evidence type="ECO:0000250" key="1"/>
<evidence type="ECO:0000255" key="2">
    <source>
        <dbReference type="PROSITE-ProRule" id="PRU01059"/>
    </source>
</evidence>
<dbReference type="EMBL" id="M98839">
    <property type="status" value="NOT_ANNOTATED_CDS"/>
    <property type="molecule type" value="mRNA"/>
</dbReference>
<dbReference type="PIR" id="A48470">
    <property type="entry name" value="A48470"/>
</dbReference>
<dbReference type="SMR" id="Q07051"/>
<dbReference type="GO" id="GO:0005737">
    <property type="term" value="C:cytoplasm"/>
    <property type="evidence" value="ECO:0007669"/>
    <property type="project" value="UniProtKB-SubCell"/>
</dbReference>
<dbReference type="GO" id="GO:0005525">
    <property type="term" value="F:GTP binding"/>
    <property type="evidence" value="ECO:0007669"/>
    <property type="project" value="UniProtKB-KW"/>
</dbReference>
<dbReference type="GO" id="GO:0003924">
    <property type="term" value="F:GTPase activity"/>
    <property type="evidence" value="ECO:0007669"/>
    <property type="project" value="InterPro"/>
</dbReference>
<dbReference type="GO" id="GO:0003746">
    <property type="term" value="F:translation elongation factor activity"/>
    <property type="evidence" value="ECO:0007669"/>
    <property type="project" value="UniProtKB-KW"/>
</dbReference>
<dbReference type="CDD" id="cd03693">
    <property type="entry name" value="EF1_alpha_II"/>
    <property type="match status" value="1"/>
</dbReference>
<dbReference type="CDD" id="cd03705">
    <property type="entry name" value="EF1_alpha_III"/>
    <property type="match status" value="1"/>
</dbReference>
<dbReference type="FunFam" id="2.40.30.10:FF:000003">
    <property type="entry name" value="Elongation factor 1-alpha"/>
    <property type="match status" value="1"/>
</dbReference>
<dbReference type="FunFam" id="2.40.30.10:FF:000005">
    <property type="entry name" value="Elongation factor 1-alpha"/>
    <property type="match status" value="1"/>
</dbReference>
<dbReference type="Gene3D" id="3.40.50.300">
    <property type="entry name" value="P-loop containing nucleotide triphosphate hydrolases"/>
    <property type="match status" value="1"/>
</dbReference>
<dbReference type="Gene3D" id="2.40.30.10">
    <property type="entry name" value="Translation factors"/>
    <property type="match status" value="2"/>
</dbReference>
<dbReference type="InterPro" id="IPR004161">
    <property type="entry name" value="EFTu-like_2"/>
</dbReference>
<dbReference type="InterPro" id="IPR054696">
    <property type="entry name" value="GTP-eEF1A_C"/>
</dbReference>
<dbReference type="InterPro" id="IPR027417">
    <property type="entry name" value="P-loop_NTPase"/>
</dbReference>
<dbReference type="InterPro" id="IPR000795">
    <property type="entry name" value="T_Tr_GTP-bd_dom"/>
</dbReference>
<dbReference type="InterPro" id="IPR050100">
    <property type="entry name" value="TRAFAC_GTPase_members"/>
</dbReference>
<dbReference type="InterPro" id="IPR009000">
    <property type="entry name" value="Transl_B-barrel_sf"/>
</dbReference>
<dbReference type="InterPro" id="IPR009001">
    <property type="entry name" value="Transl_elong_EF1A/Init_IF2_C"/>
</dbReference>
<dbReference type="PANTHER" id="PTHR23115">
    <property type="entry name" value="TRANSLATION FACTOR"/>
    <property type="match status" value="1"/>
</dbReference>
<dbReference type="Pfam" id="PF22594">
    <property type="entry name" value="GTP-eEF1A_C"/>
    <property type="match status" value="1"/>
</dbReference>
<dbReference type="Pfam" id="PF00009">
    <property type="entry name" value="GTP_EFTU"/>
    <property type="match status" value="1"/>
</dbReference>
<dbReference type="Pfam" id="PF03144">
    <property type="entry name" value="GTP_EFTU_D2"/>
    <property type="match status" value="1"/>
</dbReference>
<dbReference type="SUPFAM" id="SSF50465">
    <property type="entry name" value="EF-Tu/eEF-1alpha/eIF2-gamma C-terminal domain"/>
    <property type="match status" value="1"/>
</dbReference>
<dbReference type="SUPFAM" id="SSF52540">
    <property type="entry name" value="P-loop containing nucleoside triphosphate hydrolases"/>
    <property type="match status" value="1"/>
</dbReference>
<dbReference type="SUPFAM" id="SSF50447">
    <property type="entry name" value="Translation proteins"/>
    <property type="match status" value="1"/>
</dbReference>
<dbReference type="PROSITE" id="PS51722">
    <property type="entry name" value="G_TR_2"/>
    <property type="match status" value="1"/>
</dbReference>
<protein>
    <recommendedName>
        <fullName>Elongation factor 1-alpha</fullName>
        <shortName>EF-1-alpha</shortName>
    </recommendedName>
</protein>
<organism>
    <name type="scientific">Eimeria bovis</name>
    <dbReference type="NCBI Taxonomy" id="5803"/>
    <lineage>
        <taxon>Eukaryota</taxon>
        <taxon>Sar</taxon>
        <taxon>Alveolata</taxon>
        <taxon>Apicomplexa</taxon>
        <taxon>Conoidasida</taxon>
        <taxon>Coccidia</taxon>
        <taxon>Eucoccidiorida</taxon>
        <taxon>Eimeriorina</taxon>
        <taxon>Eimeriidae</taxon>
        <taxon>Eimeria</taxon>
    </lineage>
</organism>
<reference key="1">
    <citation type="journal article" date="1993" name="Mol. Biochem. Parasitol.">
        <title>Developmental gene expression in Eimeria bovis.</title>
        <authorList>
            <person name="Abrahamsen M.S."/>
            <person name="Clark T.G."/>
            <person name="Mascolo P."/>
            <person name="Speer C.A."/>
            <person name="White M.W."/>
        </authorList>
    </citation>
    <scope>NUCLEOTIDE SEQUENCE [MRNA]</scope>
    <source>
        <tissue>Oocyst</tissue>
    </source>
</reference>
<sequence>GTSQADVALLVVPADQGGFEGAFSKEGQTREHALLAFTLGVKQMIVGINKMDATTPDKYSETRFNEIQAEVSRYLKTVGYNPEKVPFVPISGFMGDNMVERSSNMPWYKGKILVEALDNVEPPKRPSDKPLRLPLQDVYKIGGIGTVPVGRVETGILKPGMVVCFAPTGLQTEVKSVEMHHTQLEQAVPGDNVGFNVKNVSVKDVKRGHVASDSKNDPAKAAASFQAQVIVLHHPGQINPGYSPVVDCHTAHIACKFAVLEKRLDRRSGKALEDDPKFIKTGDAAIIKMEPSKPMCVESFIEYPPLGRFAVRDMKQTVAVGVIKGVEKKEAGGKVTKSAQKATGKK</sequence>
<accession>Q07051</accession>
<proteinExistence type="evidence at transcript level"/>
<name>EF1A_EIMBO</name>
<feature type="chain" id="PRO_0000090921" description="Elongation factor 1-alpha">
    <location>
        <begin position="1" status="less than"/>
        <end position="346"/>
    </location>
</feature>
<feature type="domain" description="tr-type G" evidence="2">
    <location>
        <begin position="1" status="less than"/>
        <end position="127"/>
    </location>
</feature>
<feature type="binding site" evidence="1">
    <location>
        <begin position="49"/>
        <end position="52"/>
    </location>
    <ligand>
        <name>GTP</name>
        <dbReference type="ChEBI" id="CHEBI:37565"/>
    </ligand>
</feature>
<feature type="non-terminal residue">
    <location>
        <position position="1"/>
    </location>
</feature>
<comment type="function">
    <text>This protein promotes the GTP-dependent binding of aminoacyl-tRNA to the A-site of ribosomes during protein biosynthesis.</text>
</comment>
<comment type="subcellular location">
    <subcellularLocation>
        <location>Cytoplasm</location>
    </subcellularLocation>
</comment>
<comment type="developmental stage">
    <text>Expressed at high levels in fully sporulated oocysts and merozoites. Low levels found in unsporulated oocysts. Absent in partially sporulated oocysts.</text>
</comment>
<comment type="similarity">
    <text evidence="2">Belongs to the TRAFAC class translation factor GTPase superfamily. Classic translation factor GTPase family. EF-Tu/EF-1A subfamily.</text>
</comment>
<keyword id="KW-0963">Cytoplasm</keyword>
<keyword id="KW-0251">Elongation factor</keyword>
<keyword id="KW-0342">GTP-binding</keyword>
<keyword id="KW-0547">Nucleotide-binding</keyword>
<keyword id="KW-0648">Protein biosynthesis</keyword>